<dbReference type="EMBL" id="AJ507128">
    <property type="status" value="NOT_ANNOTATED_CDS"/>
    <property type="molecule type" value="Genomic_DNA"/>
</dbReference>
<dbReference type="GlyCosmos" id="P61551">
    <property type="glycosylation" value="1 site, No reported glycans"/>
</dbReference>
<dbReference type="InParanoid" id="P61551"/>
<dbReference type="Proteomes" id="UP000001519">
    <property type="component" value="Unplaced"/>
</dbReference>
<gene>
    <name type="primary">ERVFC1</name>
</gene>
<keyword id="KW-0895">ERV</keyword>
<keyword id="KW-0325">Glycoprotein</keyword>
<keyword id="KW-1185">Reference proteome</keyword>
<keyword id="KW-0732">Signal</keyword>
<keyword id="KW-0814">Transposable element</keyword>
<keyword id="KW-0261">Viral envelope protein</keyword>
<keyword id="KW-0946">Virion</keyword>
<protein>
    <recommendedName>
        <fullName>Putative endogenous retrovirus group FC1 Env polyprotein</fullName>
    </recommendedName>
    <alternativeName>
        <fullName>ERV-F(c)1 provirus ancestral Env polyprotein</fullName>
    </alternativeName>
    <alternativeName>
        <fullName>Envelope polyprotein</fullName>
    </alternativeName>
    <alternativeName>
        <fullName>GorERV-Fc1env envelope protein</fullName>
    </alternativeName>
    <domain>
        <recommendedName>
            <fullName>Truncated surface protein</fullName>
            <shortName>SU</shortName>
        </recommendedName>
    </domain>
</protein>
<accession>P61551</accession>
<comment type="function">
    <text>Retroviral envelope proteins mediate receptor recognition and membrane fusion during early infection. Endogenous envelope proteins may have kept, lost or modified their original function during evolution.</text>
</comment>
<comment type="subcellular location">
    <subcellularLocation>
        <location evidence="3">Virion</location>
    </subcellularLocation>
</comment>
<comment type="miscellaneous">
    <text>Ortholog of the human HERV-F(c)1_Xq21.33 envelope protein.</text>
</comment>
<comment type="similarity">
    <text evidence="3">Belongs to the gamma type-C retroviral envelope protein family. HERV class-I F(c)1 env subfamily.</text>
</comment>
<comment type="caution">
    <text evidence="3">Could be the product of a pseudogene. Truncated; premature stop codon.</text>
</comment>
<feature type="signal peptide" evidence="2">
    <location>
        <begin position="1"/>
        <end position="22"/>
    </location>
</feature>
<feature type="chain" id="PRO_0000008436" description="Putative endogenous retrovirus group FC1 Env polyprotein">
    <location>
        <begin position="23"/>
        <end position="179"/>
    </location>
</feature>
<feature type="region of interest" description="Truncated surface protein" evidence="1">
    <location>
        <begin position="23"/>
        <end position="179"/>
    </location>
</feature>
<feature type="glycosylation site" description="N-linked (GlcNAc...) asparagine" evidence="2">
    <location>
        <position position="69"/>
    </location>
</feature>
<proteinExistence type="uncertain"/>
<organism>
    <name type="scientific">Gorilla gorilla gorilla</name>
    <name type="common">Western lowland gorilla</name>
    <dbReference type="NCBI Taxonomy" id="9595"/>
    <lineage>
        <taxon>Eukaryota</taxon>
        <taxon>Metazoa</taxon>
        <taxon>Chordata</taxon>
        <taxon>Craniata</taxon>
        <taxon>Vertebrata</taxon>
        <taxon>Euteleostomi</taxon>
        <taxon>Mammalia</taxon>
        <taxon>Eutheria</taxon>
        <taxon>Euarchontoglires</taxon>
        <taxon>Primates</taxon>
        <taxon>Haplorrhini</taxon>
        <taxon>Catarrhini</taxon>
        <taxon>Hominidae</taxon>
        <taxon>Gorilla</taxon>
    </lineage>
</organism>
<sequence>MARPSPLCLLLLLTLLPPIVPSNSLLTEPPFRWRFYLHETWTQGNWLSTVTLATVDCQPHGCQAQVTFNFTSFKSVLRGWSNPTICFVYDQTHSNCRDYWADTNGGCPYAYCHMHVTQLDTAKKLQHTYRLTSDGRTTYFLTIPDPWDSRWVSRVTGRLYQWPTDSYPVSKLRIFRTYV</sequence>
<name>EFC1_GORGO</name>
<reference key="1">
    <citation type="journal article" date="2003" name="Virology">
        <title>Characterization of the low-copy HERV-Fc family: evidence for recent integrations in primates of elements with coding envelope genes.</title>
        <authorList>
            <person name="Benit L."/>
            <person name="Calteau A."/>
            <person name="Heidmann T."/>
        </authorList>
    </citation>
    <scope>NUCLEOTIDE SEQUENCE [GENOMIC DNA]</scope>
</reference>
<evidence type="ECO:0000250" key="1"/>
<evidence type="ECO:0000255" key="2"/>
<evidence type="ECO:0000305" key="3"/>